<comment type="function">
    <text evidence="1">Part of the ABC transporter complex PhnCDE involved in phosphonates import. Responsible for energy coupling to the transport system.</text>
</comment>
<comment type="catalytic activity">
    <reaction evidence="1">
        <text>phosphonate(out) + ATP + H2O = phosphonate(in) + ADP + phosphate + H(+)</text>
        <dbReference type="Rhea" id="RHEA:18065"/>
        <dbReference type="ChEBI" id="CHEBI:15377"/>
        <dbReference type="ChEBI" id="CHEBI:15378"/>
        <dbReference type="ChEBI" id="CHEBI:16215"/>
        <dbReference type="ChEBI" id="CHEBI:30616"/>
        <dbReference type="ChEBI" id="CHEBI:43474"/>
        <dbReference type="ChEBI" id="CHEBI:456216"/>
        <dbReference type="EC" id="7.3.2.2"/>
    </reaction>
</comment>
<comment type="subunit">
    <text evidence="1">The complex is composed of two ATP-binding proteins (PhnC), two transmembrane proteins (PhnE) and a solute-binding protein (PhnD).</text>
</comment>
<comment type="subcellular location">
    <subcellularLocation>
        <location evidence="1">Cell membrane</location>
        <topology evidence="1">Peripheral membrane protein</topology>
    </subcellularLocation>
</comment>
<comment type="similarity">
    <text evidence="1">Belongs to the ABC transporter superfamily. Phosphonates importer (TC 3.A.1.9.1) family.</text>
</comment>
<accession>Q7A848</accession>
<name>PHNC_STAAN</name>
<organism>
    <name type="scientific">Staphylococcus aureus (strain N315)</name>
    <dbReference type="NCBI Taxonomy" id="158879"/>
    <lineage>
        <taxon>Bacteria</taxon>
        <taxon>Bacillati</taxon>
        <taxon>Bacillota</taxon>
        <taxon>Bacilli</taxon>
        <taxon>Bacillales</taxon>
        <taxon>Staphylococcaceae</taxon>
        <taxon>Staphylococcus</taxon>
    </lineage>
</organism>
<keyword id="KW-0067">ATP-binding</keyword>
<keyword id="KW-1003">Cell membrane</keyword>
<keyword id="KW-0472">Membrane</keyword>
<keyword id="KW-0547">Nucleotide-binding</keyword>
<keyword id="KW-0918">Phosphonate transport</keyword>
<keyword id="KW-1278">Translocase</keyword>
<keyword id="KW-0813">Transport</keyword>
<dbReference type="EC" id="7.3.2.2" evidence="1"/>
<dbReference type="EMBL" id="BA000018">
    <property type="protein sequence ID" value="BAB41357.1"/>
    <property type="molecule type" value="Genomic_DNA"/>
</dbReference>
<dbReference type="PIR" id="B89775">
    <property type="entry name" value="B89775"/>
</dbReference>
<dbReference type="RefSeq" id="WP_000078092.1">
    <property type="nucleotide sequence ID" value="NC_002745.2"/>
</dbReference>
<dbReference type="SMR" id="Q7A848"/>
<dbReference type="EnsemblBacteria" id="BAB41357">
    <property type="protein sequence ID" value="BAB41357"/>
    <property type="gene ID" value="BAB41357"/>
</dbReference>
<dbReference type="KEGG" id="sau:SA0137"/>
<dbReference type="HOGENOM" id="CLU_000604_1_22_9"/>
<dbReference type="GO" id="GO:0005886">
    <property type="term" value="C:plasma membrane"/>
    <property type="evidence" value="ECO:0007669"/>
    <property type="project" value="UniProtKB-SubCell"/>
</dbReference>
<dbReference type="GO" id="GO:0015416">
    <property type="term" value="F:ABC-type phosphonate transporter activity"/>
    <property type="evidence" value="ECO:0007669"/>
    <property type="project" value="UniProtKB-EC"/>
</dbReference>
<dbReference type="GO" id="GO:0005524">
    <property type="term" value="F:ATP binding"/>
    <property type="evidence" value="ECO:0007669"/>
    <property type="project" value="UniProtKB-KW"/>
</dbReference>
<dbReference type="GO" id="GO:0016887">
    <property type="term" value="F:ATP hydrolysis activity"/>
    <property type="evidence" value="ECO:0007669"/>
    <property type="project" value="InterPro"/>
</dbReference>
<dbReference type="CDD" id="cd03256">
    <property type="entry name" value="ABC_PhnC_transporter"/>
    <property type="match status" value="1"/>
</dbReference>
<dbReference type="Gene3D" id="3.40.50.300">
    <property type="entry name" value="P-loop containing nucleotide triphosphate hydrolases"/>
    <property type="match status" value="1"/>
</dbReference>
<dbReference type="InterPro" id="IPR003593">
    <property type="entry name" value="AAA+_ATPase"/>
</dbReference>
<dbReference type="InterPro" id="IPR003439">
    <property type="entry name" value="ABC_transporter-like_ATP-bd"/>
</dbReference>
<dbReference type="InterPro" id="IPR017871">
    <property type="entry name" value="ABC_transporter-like_CS"/>
</dbReference>
<dbReference type="InterPro" id="IPR012693">
    <property type="entry name" value="ABC_transpr_PhnC"/>
</dbReference>
<dbReference type="InterPro" id="IPR050086">
    <property type="entry name" value="MetN_ABC_transporter-like"/>
</dbReference>
<dbReference type="InterPro" id="IPR027417">
    <property type="entry name" value="P-loop_NTPase"/>
</dbReference>
<dbReference type="NCBIfam" id="TIGR02315">
    <property type="entry name" value="ABC_phnC"/>
    <property type="match status" value="1"/>
</dbReference>
<dbReference type="PANTHER" id="PTHR43166">
    <property type="entry name" value="AMINO ACID IMPORT ATP-BINDING PROTEIN"/>
    <property type="match status" value="1"/>
</dbReference>
<dbReference type="PANTHER" id="PTHR43166:SF6">
    <property type="entry name" value="PHOSPHONATES IMPORT ATP-BINDING PROTEIN PHNC"/>
    <property type="match status" value="1"/>
</dbReference>
<dbReference type="Pfam" id="PF00005">
    <property type="entry name" value="ABC_tran"/>
    <property type="match status" value="1"/>
</dbReference>
<dbReference type="SMART" id="SM00382">
    <property type="entry name" value="AAA"/>
    <property type="match status" value="1"/>
</dbReference>
<dbReference type="SUPFAM" id="SSF52540">
    <property type="entry name" value="P-loop containing nucleoside triphosphate hydrolases"/>
    <property type="match status" value="1"/>
</dbReference>
<dbReference type="PROSITE" id="PS00211">
    <property type="entry name" value="ABC_TRANSPORTER_1"/>
    <property type="match status" value="1"/>
</dbReference>
<dbReference type="PROSITE" id="PS50893">
    <property type="entry name" value="ABC_TRANSPORTER_2"/>
    <property type="match status" value="1"/>
</dbReference>
<dbReference type="PROSITE" id="PS51249">
    <property type="entry name" value="PHNC"/>
    <property type="match status" value="1"/>
</dbReference>
<reference key="1">
    <citation type="journal article" date="2001" name="Lancet">
        <title>Whole genome sequencing of meticillin-resistant Staphylococcus aureus.</title>
        <authorList>
            <person name="Kuroda M."/>
            <person name="Ohta T."/>
            <person name="Uchiyama I."/>
            <person name="Baba T."/>
            <person name="Yuzawa H."/>
            <person name="Kobayashi I."/>
            <person name="Cui L."/>
            <person name="Oguchi A."/>
            <person name="Aoki K."/>
            <person name="Nagai Y."/>
            <person name="Lian J.-Q."/>
            <person name="Ito T."/>
            <person name="Kanamori M."/>
            <person name="Matsumaru H."/>
            <person name="Maruyama A."/>
            <person name="Murakami H."/>
            <person name="Hosoyama A."/>
            <person name="Mizutani-Ui Y."/>
            <person name="Takahashi N.K."/>
            <person name="Sawano T."/>
            <person name="Inoue R."/>
            <person name="Kaito C."/>
            <person name="Sekimizu K."/>
            <person name="Hirakawa H."/>
            <person name="Kuhara S."/>
            <person name="Goto S."/>
            <person name="Yabuzaki J."/>
            <person name="Kanehisa M."/>
            <person name="Yamashita A."/>
            <person name="Oshima K."/>
            <person name="Furuya K."/>
            <person name="Yoshino C."/>
            <person name="Shiba T."/>
            <person name="Hattori M."/>
            <person name="Ogasawara N."/>
            <person name="Hayashi H."/>
            <person name="Hiramatsu K."/>
        </authorList>
    </citation>
    <scope>NUCLEOTIDE SEQUENCE [LARGE SCALE GENOMIC DNA]</scope>
    <source>
        <strain>N315</strain>
    </source>
</reference>
<sequence>MSQIEFKNVSKVYPNGHVGLKNINLNIEKGEFAVIVGLSGAGKSTLLRSVNRLHDITSGEIFIQGKSITKAHGKALLEMRRNIGMIFQHFNLVKRSSVLRNVLSGRVGYHPTWKMVLGLFPKEDKIKAMDALERVNILDKYNQRSDELSGGQQQRISIARALCQESEIILADEPVASLDPLTTKQVMDDLRKINQELGITILINLHFVDLAKEYGTRIIGLRDGEVVYDGPASEATDDVFSEIYGRTIKEDEKLGVN</sequence>
<gene>
    <name evidence="1" type="primary">phnC</name>
    <name type="ordered locus">SA0137</name>
</gene>
<proteinExistence type="inferred from homology"/>
<protein>
    <recommendedName>
        <fullName evidence="1">Phosphonates import ATP-binding protein PhnC</fullName>
        <ecNumber evidence="1">7.3.2.2</ecNumber>
    </recommendedName>
</protein>
<evidence type="ECO:0000255" key="1">
    <source>
        <dbReference type="HAMAP-Rule" id="MF_01713"/>
    </source>
</evidence>
<feature type="chain" id="PRO_0000092731" description="Phosphonates import ATP-binding protein PhnC">
    <location>
        <begin position="1"/>
        <end position="257"/>
    </location>
</feature>
<feature type="domain" description="ABC transporter" evidence="1">
    <location>
        <begin position="4"/>
        <end position="248"/>
    </location>
</feature>
<feature type="binding site" evidence="1">
    <location>
        <begin position="37"/>
        <end position="44"/>
    </location>
    <ligand>
        <name>ATP</name>
        <dbReference type="ChEBI" id="CHEBI:30616"/>
    </ligand>
</feature>